<sequence>MSISFRTNTSMMNIAYKNRDLSDEEFKEEAHQFRDKEIKILEEKLKELNISCKVVGINSIKDMNEYKEIMENVNQAKEELKRIDELIAVRSSRIDFLEDKTLRITGNQR</sequence>
<feature type="chain" id="PRO_0000275932" description="Uncharacterized protein SPD_2302 homolog">
    <location>
        <begin position="1"/>
        <end position="109"/>
    </location>
</feature>
<feature type="coiled-coil region" evidence="1">
    <location>
        <begin position="27"/>
        <end position="89"/>
    </location>
</feature>
<gene>
    <name type="primary">orf2</name>
    <name type="synonym">orf1</name>
</gene>
<reference key="1">
    <citation type="journal article" date="1991" name="FEMS Microbiol. Lett.">
        <title>Novel plasmids in clinical strains of Streptococcus pneumoniae.</title>
        <authorList>
            <person name="Sibold C."/>
            <person name="Markiewicz Z."/>
            <person name="Latorre C."/>
            <person name="Hakenbeck R."/>
        </authorList>
    </citation>
    <scope>NUCLEOTIDE SEQUENCE [GENOMIC DNA]</scope>
    <source>
        <strain>671</strain>
        <plasmid>pPR3</plasmid>
    </source>
</reference>
<reference key="2">
    <citation type="journal article" date="1999" name="Int. Microbiol.">
        <title>Construction of a new Streptococcus pneumoniae-Escherichia coli shuttle vector based on the replicon of an indigenous pneumococcal cryptic plasmid.</title>
        <authorList>
            <person name="Munoz R."/>
            <person name="Garcia E."/>
            <person name="Lopez R."/>
        </authorList>
    </citation>
    <scope>NUCLEOTIDE SEQUENCE [GENOMIC DNA]</scope>
    <source>
        <strain>13868</strain>
        <plasmid>pRMG1</plasmid>
    </source>
</reference>
<reference key="3">
    <citation type="journal article" date="1999" name="Plasmid">
        <title>Characterization of cryptic plasmids pDP1 and pSMB1 of Streptococcus pneumoniae.</title>
        <authorList>
            <person name="Oggioni M.R."/>
            <person name="Iannelli F."/>
            <person name="Pozzi G."/>
        </authorList>
    </citation>
    <scope>NUCLEOTIDE SEQUENCE [GENOMIC DNA]</scope>
    <source>
        <strain>A6011</strain>
        <plasmid>pSMB1</plasmid>
    </source>
</reference>
<dbReference type="EMBL" id="AJ223491">
    <property type="protein sequence ID" value="CAA11408.1"/>
    <property type="molecule type" value="Genomic_DNA"/>
</dbReference>
<dbReference type="EMBL" id="AJ005619">
    <property type="protein sequence ID" value="CAA06627.1"/>
    <property type="molecule type" value="Genomic_DNA"/>
</dbReference>
<dbReference type="EMBL" id="AF047385">
    <property type="protein sequence ID" value="AAD12159.1"/>
    <property type="molecule type" value="Genomic_DNA"/>
</dbReference>
<dbReference type="RefSeq" id="NP_863584.1">
    <property type="nucleotide sequence ID" value="NC_005021.1"/>
</dbReference>
<dbReference type="RefSeq" id="WP_004215606.1">
    <property type="nucleotide sequence ID" value="NZ_UEMX01000031.1"/>
</dbReference>
<dbReference type="SMR" id="P0C2G9"/>
<geneLocation type="plasmid">
    <name>pPR3</name>
</geneLocation>
<geneLocation type="plasmid">
    <name>pRMG1</name>
</geneLocation>
<geneLocation type="plasmid">
    <name>pSMB1</name>
</geneLocation>
<keyword id="KW-0175">Coiled coil</keyword>
<keyword id="KW-0614">Plasmid</keyword>
<evidence type="ECO:0000255" key="1"/>
<accession>P0C2G9</accession>
<protein>
    <recommendedName>
        <fullName>Uncharacterized protein SPD_2302 homolog</fullName>
    </recommendedName>
</protein>
<proteinExistence type="predicted"/>
<name>Y2302_STREE</name>
<organism>
    <name type="scientific">Streptococcus pneumoniae</name>
    <dbReference type="NCBI Taxonomy" id="1313"/>
    <lineage>
        <taxon>Bacteria</taxon>
        <taxon>Bacillati</taxon>
        <taxon>Bacillota</taxon>
        <taxon>Bacilli</taxon>
        <taxon>Lactobacillales</taxon>
        <taxon>Streptococcaceae</taxon>
        <taxon>Streptococcus</taxon>
    </lineage>
</organism>